<keyword id="KW-0010">Activator</keyword>
<keyword id="KW-0539">Nucleus</keyword>
<keyword id="KW-1185">Reference proteome</keyword>
<keyword id="KW-0678">Repressor</keyword>
<keyword id="KW-0804">Transcription</keyword>
<keyword id="KW-0805">Transcription regulation</keyword>
<dbReference type="EMBL" id="AAVQ01000001">
    <property type="protein sequence ID" value="EAZ63285.2"/>
    <property type="molecule type" value="Genomic_DNA"/>
</dbReference>
<dbReference type="RefSeq" id="XP_001387308.2">
    <property type="nucleotide sequence ID" value="XM_001387271.1"/>
</dbReference>
<dbReference type="FunCoup" id="A3GF47">
    <property type="interactions" value="146"/>
</dbReference>
<dbReference type="STRING" id="322104.A3GF47"/>
<dbReference type="GeneID" id="4850896"/>
<dbReference type="KEGG" id="pic:PICST_86078"/>
<dbReference type="eggNOG" id="KOG4522">
    <property type="taxonomic scope" value="Eukaryota"/>
</dbReference>
<dbReference type="HOGENOM" id="CLU_003142_0_0_1"/>
<dbReference type="InParanoid" id="A3GF47"/>
<dbReference type="OMA" id="HWLQEWT"/>
<dbReference type="OrthoDB" id="20828at2759"/>
<dbReference type="Proteomes" id="UP000002258">
    <property type="component" value="Chromosome 1"/>
</dbReference>
<dbReference type="GO" id="GO:0016592">
    <property type="term" value="C:mediator complex"/>
    <property type="evidence" value="ECO:0007669"/>
    <property type="project" value="InterPro"/>
</dbReference>
<dbReference type="GO" id="GO:0003712">
    <property type="term" value="F:transcription coregulator activity"/>
    <property type="evidence" value="ECO:0007669"/>
    <property type="project" value="InterPro"/>
</dbReference>
<dbReference type="GO" id="GO:0006357">
    <property type="term" value="P:regulation of transcription by RNA polymerase II"/>
    <property type="evidence" value="ECO:0007669"/>
    <property type="project" value="InterPro"/>
</dbReference>
<dbReference type="InterPro" id="IPR019035">
    <property type="entry name" value="Mediator_Med12"/>
</dbReference>
<dbReference type="PANTHER" id="PTHR46567">
    <property type="entry name" value="MEDIATOR OF RNA POLYMERASE II TRANSCRIPTION SUBUNIT 12"/>
    <property type="match status" value="1"/>
</dbReference>
<dbReference type="PANTHER" id="PTHR46567:SF1">
    <property type="entry name" value="MEDIATOR OF RNA POLYMERASE II TRANSCRIPTION SUBUNIT 12"/>
    <property type="match status" value="1"/>
</dbReference>
<dbReference type="Pfam" id="PF09497">
    <property type="entry name" value="Med12"/>
    <property type="match status" value="1"/>
</dbReference>
<dbReference type="SMART" id="SM01281">
    <property type="entry name" value="Med12"/>
    <property type="match status" value="1"/>
</dbReference>
<feature type="chain" id="PRO_0000312977" description="Mediator of RNA polymerase II transcription subunit 12">
    <location>
        <begin position="1"/>
        <end position="1654"/>
    </location>
</feature>
<feature type="region of interest" description="Disordered" evidence="2">
    <location>
        <begin position="52"/>
        <end position="72"/>
    </location>
</feature>
<feature type="region of interest" description="Disordered" evidence="2">
    <location>
        <begin position="1481"/>
        <end position="1530"/>
    </location>
</feature>
<feature type="compositionally biased region" description="Polar residues" evidence="2">
    <location>
        <begin position="1515"/>
        <end position="1530"/>
    </location>
</feature>
<protein>
    <recommendedName>
        <fullName>Mediator of RNA polymerase II transcription subunit 12</fullName>
    </recommendedName>
    <alternativeName>
        <fullName>Mediator complex subunit 12</fullName>
    </alternativeName>
</protein>
<evidence type="ECO:0000250" key="1"/>
<evidence type="ECO:0000256" key="2">
    <source>
        <dbReference type="SAM" id="MobiDB-lite"/>
    </source>
</evidence>
<evidence type="ECO:0000305" key="3"/>
<name>SRB8_PICST</name>
<organism>
    <name type="scientific">Scheffersomyces stipitis (strain ATCC 58785 / CBS 6054 / NBRC 10063 / NRRL Y-11545)</name>
    <name type="common">Yeast</name>
    <name type="synonym">Pichia stipitis</name>
    <dbReference type="NCBI Taxonomy" id="322104"/>
    <lineage>
        <taxon>Eukaryota</taxon>
        <taxon>Fungi</taxon>
        <taxon>Dikarya</taxon>
        <taxon>Ascomycota</taxon>
        <taxon>Saccharomycotina</taxon>
        <taxon>Pichiomycetes</taxon>
        <taxon>Debaryomycetaceae</taxon>
        <taxon>Scheffersomyces</taxon>
    </lineage>
</organism>
<accession>A3GF47</accession>
<comment type="function">
    <text evidence="1">Component of the SRB8-11 complex. The SRB8-11 complex is a regulatory module of the Mediator complex which is itself involved in regulation of basal and activated RNA polymerase II-dependent transcription. The SRB8-11 complex may be involved in the transcriptional repression of a subset of genes regulated by Mediator. It may inhibit the association of the Mediator complex with RNA polymerase II to form the holoenzyme complex (By similarity).</text>
</comment>
<comment type="subunit">
    <text evidence="1">Component of the SRB8-11 complex, which itself associates with the Mediator complex.</text>
</comment>
<comment type="subcellular location">
    <subcellularLocation>
        <location evidence="3">Nucleus</location>
    </subcellularLocation>
</comment>
<comment type="similarity">
    <text evidence="3">Belongs to the Mediator complex subunit 12 family.</text>
</comment>
<gene>
    <name type="primary">SRB8</name>
    <name type="synonym">MED12</name>
    <name type="ORF">PICST_86078</name>
</gene>
<proteinExistence type="inferred from homology"/>
<sequence length="1654" mass="189211">MSKARSRNSLLSSSNRAQFGNSTQDELLKLKFSMEKPDIGLYPLNDLDNGVDLNGDNSRSQHTAGSGVLSGNEVTYPDYKPWKDHTALPNDKKEQEHQKLNNAAYLNKGYFETPVVANEYYSARNLIQATVFSSTENCNEVLKELSQHLANAYKTRNEIINKIKYESNNFKIPPRVTLTASKKESWLKDLANPDLALSKIAEKIPHGIRNKILIDAVCNKSVPINRALWFTKCVLFGELVALRRKHQSRMSLNSPIPQSLDINTPEKFEIHWLQEWTQQVADYIYKFSKESSNFNTIERKQYYMNKMTYLLTYIQALYVEFLLDKSFFLALIIKFLKEGLPLDPLHVSELLSSTRSETDDLIQESWIEDLDLNYGQRLFALTLIKIFWNDILKFDYICKELSETLLLNYLFISKINAYSFKQSHVQNHKASIPEPLRQKILDMIGDTITYLFKFNTNVFIIPNYWMLINGVLFTILLNKNVTKTEGELDEISKQFDLIKYRNESLILNMRNVQPSITDRATPNSAGRRGSSIWNQSFVSAAESTATKIDIFDNEATFINRSSDDILKIISQLDSLKLNDELANFLKPVTSSSALTSTAIKGCPKWRTNLKVVLYWCITRHRNSRESSEDILIICNFLKRKVLQTLGPTRSSSQLKAEFESEILDIIYNIADTNSSKVVNYDLYVLINELYQLKVLTIASYLRKLIASGIFYVAPDAEDNILNDNSNSLVKTHLSILQNLPVINNRQCDSILKKWTSTGFNFKEKFEMGQEILKRELIDRIVNNTFDDQFESHIVYVKDLNVGLKFLLVNWVTNELKSAITESPKLIHINPLIISNLFNFYSICDNLTVFFKVLVKFILKNEGGMIIFYLESLYLIARLIIKHFKLVKFIAGNSYGSNSTAYELFKLIIQNYKDCKTREFDYFKFDQVWNFIDTAVESNYSSDKNTDSRSSGKRSGIFNKEQFDSPMKINTSENVIAKMEDRYTSADFRNDLDLLLESTFQPMDSNEVSEVVATLKLEFEENEMKSHRNVVPKVLDLLKSNLTEESEGLAAKLLINSQYLIKSDDVNAFDKLVQDYILELVKSDMEILLVAKFLKKLIVHEIIRINDLFAFFEPIAEDPAFRVKLKALMFDLVIGLSDEEREYLSNSQILQLEIMRQWYRERSTSSFLVLILKGIKTIEGSIFDCPLMEKYGSSIFRILNALIVANTKLLSDELISKISTEDSIRLLSTLNNENFTPINSLQDLERIASEVDEFNLPIFQLLLRVLTIKELSPLQENEIQERLKVLLESFLENLSFGFTPMNSYFGELFIYLPWEYVVSILGMLEDKFLCSTTFNFDQWDNDKSVLSLTNSVGNTNLLPVFNDYFKKFSSSSSNVVESSSSFFQALSKFLSKLLLIVNSDNCLEDTFEDTSSAISIFLRILIIHKLTLTRLIVTQDGEQFQFIKNLILLINSKFIAEGNEKLRILLYDLLLLMKSSVTEEVSKQTENELSEGTSPGFGMTAQSPPPVEDASKITEPLSSARPSSEAASFQTNPISTYDQVSSLFNLPEPTETNPFKDYITEDRVECALTLSEDELQSGGDIHGFNESNLVLISSSNDSTFSGAFALITNPHQRPKGQPFKLRSFEILEGTSTTSLNDGCINLQLFDSYTTKENPP</sequence>
<reference key="1">
    <citation type="journal article" date="2007" name="Nat. Biotechnol.">
        <title>Genome sequence of the lignocellulose-bioconverting and xylose-fermenting yeast Pichia stipitis.</title>
        <authorList>
            <person name="Jeffries T.W."/>
            <person name="Grigoriev I.V."/>
            <person name="Grimwood J."/>
            <person name="Laplaza J.M."/>
            <person name="Aerts A."/>
            <person name="Salamov A."/>
            <person name="Schmutz J."/>
            <person name="Lindquist E."/>
            <person name="Dehal P."/>
            <person name="Shapiro H."/>
            <person name="Jin Y.-S."/>
            <person name="Passoth V."/>
            <person name="Richardson P.M."/>
        </authorList>
    </citation>
    <scope>NUCLEOTIDE SEQUENCE [LARGE SCALE GENOMIC DNA]</scope>
    <source>
        <strain>ATCC 58785 / CBS 6054 / NBRC 10063 / NRRL Y-11545</strain>
    </source>
</reference>